<sequence length="523" mass="61079">MGGKNKIEILFQLQSALSRRRISSLVDFRRVFPPETPNHKNNITLSRFHFLGTHFLHSLGAPDKFPNRFNDDKDKQSALDVHNIIKHHRGSSPEKIKRILDKCGIDLTEELVLEVVNRNRSDWKPAYILSQLVVKQSVHLSSSMLYNEILDVLGKMRRFEEFHQVFDEMSKRDGFVNEKTYEVLLNRYAAAHKVDEAVGVFERRKEFGIDDDLVAFHGLLMWLCRYKHVEFAETLFCSRRREFGCDIKAMNMILNGWCVLGNVHEAKRFWKDIIASKCRPDVVSYGTMINALTKKGKLGKAMELYRAMWDTRRNPDVKICNNVIDALCFKKRIPEALEVFREISEKGPDPNVVTYNSLLKHLCKIRRTEKVWELVEEMELKGGSCSPNDVTFSYLLKYSQRSKDVDIVLERMAKNKCEMTSDLYNLMFRLYVQWDKEEKVREIWSEMERSGLGPDQRTYTIRIHGLHTKGKIGEALSYFQEMMSKGMVPEPRTEMLLNQNKTKPRVEDKMLRSNLTSEESESD</sequence>
<evidence type="ECO:0000256" key="1">
    <source>
        <dbReference type="SAM" id="MobiDB-lite"/>
    </source>
</evidence>
<evidence type="ECO:0000305" key="2"/>
<gene>
    <name type="ordered locus">At3g15200</name>
    <name type="ORF">F4B12.11</name>
</gene>
<comment type="similarity">
    <text evidence="2">Belongs to the PPR family. P subfamily.</text>
</comment>
<comment type="online information" name="Pentatricopeptide repeat proteins">
    <link uri="https://ppr.plantenergy.uwa.edu.au"/>
</comment>
<reference key="1">
    <citation type="journal article" date="2000" name="DNA Res.">
        <title>Structural analysis of Arabidopsis thaliana chromosome 3. II. Sequence features of the 4,251,695 bp regions covered by 90 P1, TAC and BAC clones.</title>
        <authorList>
            <person name="Kaneko T."/>
            <person name="Katoh T."/>
            <person name="Sato S."/>
            <person name="Nakamura Y."/>
            <person name="Asamizu E."/>
            <person name="Tabata S."/>
        </authorList>
    </citation>
    <scope>NUCLEOTIDE SEQUENCE [LARGE SCALE GENOMIC DNA]</scope>
    <source>
        <strain>cv. Columbia</strain>
    </source>
</reference>
<reference key="2">
    <citation type="journal article" date="2017" name="Plant J.">
        <title>Araport11: a complete reannotation of the Arabidopsis thaliana reference genome.</title>
        <authorList>
            <person name="Cheng C.Y."/>
            <person name="Krishnakumar V."/>
            <person name="Chan A.P."/>
            <person name="Thibaud-Nissen F."/>
            <person name="Schobel S."/>
            <person name="Town C.D."/>
        </authorList>
    </citation>
    <scope>GENOME REANNOTATION</scope>
    <source>
        <strain>cv. Columbia</strain>
    </source>
</reference>
<reference key="3">
    <citation type="journal article" date="2004" name="Plant Cell">
        <title>Genome-wide analysis of Arabidopsis pentatricopeptide repeat proteins reveals their essential role in organelle biogenesis.</title>
        <authorList>
            <person name="Lurin C."/>
            <person name="Andres C."/>
            <person name="Aubourg S."/>
            <person name="Bellaoui M."/>
            <person name="Bitton F."/>
            <person name="Bruyere C."/>
            <person name="Caboche M."/>
            <person name="Debast C."/>
            <person name="Gualberto J."/>
            <person name="Hoffmann B."/>
            <person name="Lecharny A."/>
            <person name="Le Ret M."/>
            <person name="Martin-Magniette M.-L."/>
            <person name="Mireau H."/>
            <person name="Peeters N."/>
            <person name="Renou J.-P."/>
            <person name="Szurek B."/>
            <person name="Taconnat L."/>
            <person name="Small I."/>
        </authorList>
    </citation>
    <scope>GENE FAMILY</scope>
</reference>
<keyword id="KW-1185">Reference proteome</keyword>
<keyword id="KW-0677">Repeat</keyword>
<dbReference type="EMBL" id="AP001299">
    <property type="protein sequence ID" value="BAB02574.1"/>
    <property type="molecule type" value="Genomic_DNA"/>
</dbReference>
<dbReference type="EMBL" id="CP002686">
    <property type="protein sequence ID" value="AEE75631.1"/>
    <property type="molecule type" value="Genomic_DNA"/>
</dbReference>
<dbReference type="RefSeq" id="NP_188138.1">
    <property type="nucleotide sequence ID" value="NM_112383.1"/>
</dbReference>
<dbReference type="SMR" id="Q9LIL5"/>
<dbReference type="FunCoup" id="Q9LIL5">
    <property type="interactions" value="8"/>
</dbReference>
<dbReference type="iPTMnet" id="Q9LIL5"/>
<dbReference type="PaxDb" id="3702-AT3G15200.1"/>
<dbReference type="ProteomicsDB" id="249180"/>
<dbReference type="EnsemblPlants" id="AT3G15200.1">
    <property type="protein sequence ID" value="AT3G15200.1"/>
    <property type="gene ID" value="AT3G15200"/>
</dbReference>
<dbReference type="GeneID" id="820751"/>
<dbReference type="Gramene" id="AT3G15200.1">
    <property type="protein sequence ID" value="AT3G15200.1"/>
    <property type="gene ID" value="AT3G15200"/>
</dbReference>
<dbReference type="KEGG" id="ath:AT3G15200"/>
<dbReference type="Araport" id="AT3G15200"/>
<dbReference type="TAIR" id="AT3G15200"/>
<dbReference type="eggNOG" id="KOG4197">
    <property type="taxonomic scope" value="Eukaryota"/>
</dbReference>
<dbReference type="HOGENOM" id="CLU_002706_49_20_1"/>
<dbReference type="InParanoid" id="Q9LIL5"/>
<dbReference type="OMA" id="RYKHVEV"/>
<dbReference type="PhylomeDB" id="Q9LIL5"/>
<dbReference type="PRO" id="PR:Q9LIL5"/>
<dbReference type="Proteomes" id="UP000006548">
    <property type="component" value="Chromosome 3"/>
</dbReference>
<dbReference type="ExpressionAtlas" id="Q9LIL5">
    <property type="expression patterns" value="baseline and differential"/>
</dbReference>
<dbReference type="GO" id="GO:0022626">
    <property type="term" value="C:cytosolic ribosome"/>
    <property type="evidence" value="ECO:0007005"/>
    <property type="project" value="TAIR"/>
</dbReference>
<dbReference type="Gene3D" id="1.25.40.10">
    <property type="entry name" value="Tetratricopeptide repeat domain"/>
    <property type="match status" value="4"/>
</dbReference>
<dbReference type="InterPro" id="IPR002885">
    <property type="entry name" value="Pentatricopeptide_rpt"/>
</dbReference>
<dbReference type="InterPro" id="IPR050872">
    <property type="entry name" value="PPR_P_subfamily"/>
</dbReference>
<dbReference type="InterPro" id="IPR011990">
    <property type="entry name" value="TPR-like_helical_dom_sf"/>
</dbReference>
<dbReference type="NCBIfam" id="TIGR00756">
    <property type="entry name" value="PPR"/>
    <property type="match status" value="6"/>
</dbReference>
<dbReference type="PANTHER" id="PTHR46128">
    <property type="entry name" value="MITOCHONDRIAL GROUP I INTRON SPLICING FACTOR CCM1"/>
    <property type="match status" value="1"/>
</dbReference>
<dbReference type="PANTHER" id="PTHR46128:SF253">
    <property type="entry name" value="PENTACOTRIPEPTIDE-REPEAT REGION OF PRORP DOMAIN-CONTAINING PROTEIN"/>
    <property type="match status" value="1"/>
</dbReference>
<dbReference type="Pfam" id="PF01535">
    <property type="entry name" value="PPR"/>
    <property type="match status" value="2"/>
</dbReference>
<dbReference type="Pfam" id="PF13041">
    <property type="entry name" value="PPR_2"/>
    <property type="match status" value="3"/>
</dbReference>
<dbReference type="SUPFAM" id="SSF48452">
    <property type="entry name" value="TPR-like"/>
    <property type="match status" value="1"/>
</dbReference>
<dbReference type="PROSITE" id="PS51375">
    <property type="entry name" value="PPR"/>
    <property type="match status" value="9"/>
</dbReference>
<feature type="chain" id="PRO_0000356092" description="Putative pentatricopeptide repeat-containing protein At3g15200">
    <location>
        <begin position="1"/>
        <end position="523"/>
    </location>
</feature>
<feature type="repeat" description="PPR 1">
    <location>
        <begin position="142"/>
        <end position="172"/>
    </location>
</feature>
<feature type="repeat" description="PPR 2">
    <location>
        <begin position="177"/>
        <end position="211"/>
    </location>
</feature>
<feature type="repeat" description="PPR 3">
    <location>
        <begin position="212"/>
        <end position="242"/>
    </location>
</feature>
<feature type="repeat" description="PPR 4">
    <location>
        <begin position="246"/>
        <end position="280"/>
    </location>
</feature>
<feature type="repeat" description="PPR 5">
    <location>
        <begin position="281"/>
        <end position="315"/>
    </location>
</feature>
<feature type="repeat" description="PPR 6">
    <location>
        <begin position="316"/>
        <end position="350"/>
    </location>
</feature>
<feature type="repeat" description="PPR 7">
    <location>
        <begin position="351"/>
        <end position="385"/>
    </location>
</feature>
<feature type="repeat" description="PPR 8">
    <location>
        <begin position="388"/>
        <end position="418"/>
    </location>
</feature>
<feature type="repeat" description="PPR 9">
    <location>
        <begin position="420"/>
        <end position="454"/>
    </location>
</feature>
<feature type="repeat" description="PPR 10">
    <location>
        <begin position="455"/>
        <end position="489"/>
    </location>
</feature>
<feature type="region of interest" description="Disordered" evidence="1">
    <location>
        <begin position="497"/>
        <end position="523"/>
    </location>
</feature>
<protein>
    <recommendedName>
        <fullName>Putative pentatricopeptide repeat-containing protein At3g15200</fullName>
    </recommendedName>
</protein>
<name>PP233_ARATH</name>
<proteinExistence type="inferred from homology"/>
<organism>
    <name type="scientific">Arabidopsis thaliana</name>
    <name type="common">Mouse-ear cress</name>
    <dbReference type="NCBI Taxonomy" id="3702"/>
    <lineage>
        <taxon>Eukaryota</taxon>
        <taxon>Viridiplantae</taxon>
        <taxon>Streptophyta</taxon>
        <taxon>Embryophyta</taxon>
        <taxon>Tracheophyta</taxon>
        <taxon>Spermatophyta</taxon>
        <taxon>Magnoliopsida</taxon>
        <taxon>eudicotyledons</taxon>
        <taxon>Gunneridae</taxon>
        <taxon>Pentapetalae</taxon>
        <taxon>rosids</taxon>
        <taxon>malvids</taxon>
        <taxon>Brassicales</taxon>
        <taxon>Brassicaceae</taxon>
        <taxon>Camelineae</taxon>
        <taxon>Arabidopsis</taxon>
    </lineage>
</organism>
<accession>Q9LIL5</accession>